<accession>Q7A0H9</accession>
<gene>
    <name type="primary">vraS</name>
    <name type="ordered locus">MW1825</name>
</gene>
<keyword id="KW-0067">ATP-binding</keyword>
<keyword id="KW-1003">Cell membrane</keyword>
<keyword id="KW-0418">Kinase</keyword>
<keyword id="KW-0472">Membrane</keyword>
<keyword id="KW-0547">Nucleotide-binding</keyword>
<keyword id="KW-0597">Phosphoprotein</keyword>
<keyword id="KW-0808">Transferase</keyword>
<keyword id="KW-0812">Transmembrane</keyword>
<keyword id="KW-1133">Transmembrane helix</keyword>
<keyword id="KW-0902">Two-component regulatory system</keyword>
<name>VRAS_STAAW</name>
<reference key="1">
    <citation type="journal article" date="2002" name="Lancet">
        <title>Genome and virulence determinants of high virulence community-acquired MRSA.</title>
        <authorList>
            <person name="Baba T."/>
            <person name="Takeuchi F."/>
            <person name="Kuroda M."/>
            <person name="Yuzawa H."/>
            <person name="Aoki K."/>
            <person name="Oguchi A."/>
            <person name="Nagai Y."/>
            <person name="Iwama N."/>
            <person name="Asano K."/>
            <person name="Naimi T."/>
            <person name="Kuroda H."/>
            <person name="Cui L."/>
            <person name="Yamamoto K."/>
            <person name="Hiramatsu K."/>
        </authorList>
    </citation>
    <scope>NUCLEOTIDE SEQUENCE [LARGE SCALE GENOMIC DNA]</scope>
    <source>
        <strain>MW2</strain>
    </source>
</reference>
<proteinExistence type="inferred from homology"/>
<comment type="function">
    <text evidence="2">Member of the two-component regulatory system PprA/PprB involved in biofilm formation by controlling the expression of many related genes including type IVb pili major subunit flp pilin, adhesin bapA or cupE fimbriae. Also modulates quorum-sensing signal production acting on both negative and positive modulators. Functions as a heme sensor histidine kinase which is autophosphorylated at a histidine residue and transfers its phosphate group to PprB.</text>
</comment>
<comment type="catalytic activity">
    <reaction evidence="1">
        <text>ATP + protein L-histidine = ADP + protein N-phospho-L-histidine.</text>
        <dbReference type="EC" id="2.7.13.3"/>
    </reaction>
</comment>
<comment type="subcellular location">
    <subcellularLocation>
        <location evidence="4">Cell membrane</location>
        <topology evidence="4">Multi-pass membrane protein</topology>
    </subcellularLocation>
</comment>
<comment type="PTM">
    <text evidence="1">Autophosphorylated on His-156.</text>
</comment>
<sequence length="347" mass="40045">MNHYIRTIGSMLILVYSMLAAFLFIDKVFVNIIYFQGMFYTQIFGIPVFLFLNLIIILLCIIVGSVLAYKINQQNDWIKTQIERSMEGETVGINDQNIEIYSETLDLYHTLVPLNQELHKLRLKTQNLTNENYNINDVKVKKIIEDERQRLARELHDSVSQQLFAASMMLSAIKETKLEPPLDQQIPILEKMVQDSQLEMRALLLHLRPLGLKDKSLGEGIKDLVIDLQKKVPMKVVHEIQDFKVPKGIEDHLFRITQEAISNTLRHSNGTKVTVELFNKDDYLLLRIQDNGKGFNVDEKLEQSYGLKNMRERALEIGATFHIVSLPDSGTRIEVKAPLNKEDSYDD</sequence>
<evidence type="ECO:0000250" key="1">
    <source>
        <dbReference type="UniProtKB" id="Q99SZ7"/>
    </source>
</evidence>
<evidence type="ECO:0000250" key="2">
    <source>
        <dbReference type="UniProtKB" id="Q9HWA7"/>
    </source>
</evidence>
<evidence type="ECO:0000255" key="3"/>
<evidence type="ECO:0000305" key="4"/>
<dbReference type="EC" id="2.7.13.3" evidence="1"/>
<dbReference type="EMBL" id="BA000033">
    <property type="protein sequence ID" value="BAB95690.1"/>
    <property type="molecule type" value="Genomic_DNA"/>
</dbReference>
<dbReference type="RefSeq" id="WP_001017131.1">
    <property type="nucleotide sequence ID" value="NC_003923.1"/>
</dbReference>
<dbReference type="SMR" id="Q7A0H9"/>
<dbReference type="KEGG" id="sam:MW1825"/>
<dbReference type="HOGENOM" id="CLU_000445_20_12_9"/>
<dbReference type="GO" id="GO:0005886">
    <property type="term" value="C:plasma membrane"/>
    <property type="evidence" value="ECO:0007669"/>
    <property type="project" value="UniProtKB-SubCell"/>
</dbReference>
<dbReference type="GO" id="GO:0005524">
    <property type="term" value="F:ATP binding"/>
    <property type="evidence" value="ECO:0007669"/>
    <property type="project" value="UniProtKB-KW"/>
</dbReference>
<dbReference type="GO" id="GO:0000155">
    <property type="term" value="F:phosphorelay sensor kinase activity"/>
    <property type="evidence" value="ECO:0007669"/>
    <property type="project" value="InterPro"/>
</dbReference>
<dbReference type="GO" id="GO:0046983">
    <property type="term" value="F:protein dimerization activity"/>
    <property type="evidence" value="ECO:0007669"/>
    <property type="project" value="InterPro"/>
</dbReference>
<dbReference type="CDD" id="cd16917">
    <property type="entry name" value="HATPase_UhpB-NarQ-NarX-like"/>
    <property type="match status" value="1"/>
</dbReference>
<dbReference type="Gene3D" id="1.20.5.1930">
    <property type="match status" value="1"/>
</dbReference>
<dbReference type="Gene3D" id="3.30.565.10">
    <property type="entry name" value="Histidine kinase-like ATPase, C-terminal domain"/>
    <property type="match status" value="1"/>
</dbReference>
<dbReference type="InterPro" id="IPR036890">
    <property type="entry name" value="HATPase_C_sf"/>
</dbReference>
<dbReference type="InterPro" id="IPR017202">
    <property type="entry name" value="LiaS/VraS"/>
</dbReference>
<dbReference type="InterPro" id="IPR050482">
    <property type="entry name" value="Sensor_HK_TwoCompSys"/>
</dbReference>
<dbReference type="InterPro" id="IPR011712">
    <property type="entry name" value="Sig_transdc_His_kin_sub3_dim/P"/>
</dbReference>
<dbReference type="PANTHER" id="PTHR24421">
    <property type="entry name" value="NITRATE/NITRITE SENSOR PROTEIN NARX-RELATED"/>
    <property type="match status" value="1"/>
</dbReference>
<dbReference type="PANTHER" id="PTHR24421:SF37">
    <property type="entry name" value="SENSOR HISTIDINE KINASE NARS"/>
    <property type="match status" value="1"/>
</dbReference>
<dbReference type="Pfam" id="PF02518">
    <property type="entry name" value="HATPase_c"/>
    <property type="match status" value="1"/>
</dbReference>
<dbReference type="Pfam" id="PF07730">
    <property type="entry name" value="HisKA_3"/>
    <property type="match status" value="1"/>
</dbReference>
<dbReference type="PIRSF" id="PIRSF037431">
    <property type="entry name" value="STHK_LiaS"/>
    <property type="match status" value="1"/>
</dbReference>
<dbReference type="SMART" id="SM00387">
    <property type="entry name" value="HATPase_c"/>
    <property type="match status" value="1"/>
</dbReference>
<dbReference type="SUPFAM" id="SSF55874">
    <property type="entry name" value="ATPase domain of HSP90 chaperone/DNA topoisomerase II/histidine kinase"/>
    <property type="match status" value="1"/>
</dbReference>
<organism>
    <name type="scientific">Staphylococcus aureus (strain MW2)</name>
    <dbReference type="NCBI Taxonomy" id="196620"/>
    <lineage>
        <taxon>Bacteria</taxon>
        <taxon>Bacillati</taxon>
        <taxon>Bacillota</taxon>
        <taxon>Bacilli</taxon>
        <taxon>Bacillales</taxon>
        <taxon>Staphylococcaceae</taxon>
        <taxon>Staphylococcus</taxon>
    </lineage>
</organism>
<protein>
    <recommendedName>
        <fullName>Sensor protein VraS</fullName>
        <ecNumber evidence="1">2.7.13.3</ecNumber>
    </recommendedName>
</protein>
<feature type="chain" id="PRO_0000074904" description="Sensor protein VraS">
    <location>
        <begin position="1"/>
        <end position="347"/>
    </location>
</feature>
<feature type="transmembrane region" description="Helical" evidence="3">
    <location>
        <begin position="13"/>
        <end position="33"/>
    </location>
</feature>
<feature type="transmembrane region" description="Helical" evidence="3">
    <location>
        <begin position="43"/>
        <end position="63"/>
    </location>
</feature>
<feature type="domain" description="Histidine kinase">
    <location>
        <begin position="150"/>
        <end position="341"/>
    </location>
</feature>
<feature type="modified residue" description="Phosphohistidine" evidence="1">
    <location>
        <position position="156"/>
    </location>
</feature>